<organism>
    <name type="scientific">Ictalurus punctatus</name>
    <name type="common">Channel catfish</name>
    <name type="synonym">Silurus punctatus</name>
    <dbReference type="NCBI Taxonomy" id="7998"/>
    <lineage>
        <taxon>Eukaryota</taxon>
        <taxon>Metazoa</taxon>
        <taxon>Chordata</taxon>
        <taxon>Craniata</taxon>
        <taxon>Vertebrata</taxon>
        <taxon>Euteleostomi</taxon>
        <taxon>Actinopterygii</taxon>
        <taxon>Neopterygii</taxon>
        <taxon>Teleostei</taxon>
        <taxon>Ostariophysi</taxon>
        <taxon>Siluriformes</taxon>
        <taxon>Ictaluridae</taxon>
        <taxon>Ictalurus</taxon>
    </lineage>
</organism>
<feature type="chain" id="PRO_0000146462" description="Small ribosomal subunit protein uS12">
    <location>
        <begin position="1"/>
        <end position="143"/>
    </location>
</feature>
<feature type="region of interest" description="Disordered" evidence="3">
    <location>
        <begin position="1"/>
        <end position="27"/>
    </location>
</feature>
<feature type="compositionally biased region" description="Basic residues" evidence="3">
    <location>
        <begin position="1"/>
        <end position="15"/>
    </location>
</feature>
<feature type="compositionally biased region" description="Basic and acidic residues" evidence="3">
    <location>
        <begin position="16"/>
        <end position="27"/>
    </location>
</feature>
<gene>
    <name type="primary">rps23</name>
</gene>
<name>RS23_ICTPU</name>
<evidence type="ECO:0000250" key="1">
    <source>
        <dbReference type="UniProtKB" id="P62266"/>
    </source>
</evidence>
<evidence type="ECO:0000250" key="2">
    <source>
        <dbReference type="UniProtKB" id="Q6SA96"/>
    </source>
</evidence>
<evidence type="ECO:0000256" key="3">
    <source>
        <dbReference type="SAM" id="MobiDB-lite"/>
    </source>
</evidence>
<evidence type="ECO:0000305" key="4"/>
<reference key="1">
    <citation type="journal article" date="2002" name="Gene">
        <title>Translational machinery of channel catfish: I. A transcriptomic approach to the analysis of 32 40S ribosomal protein genes and their expression.</title>
        <authorList>
            <person name="Karsi A."/>
            <person name="Patterson A."/>
            <person name="Feng J."/>
            <person name="Liu Z.-J."/>
        </authorList>
    </citation>
    <scope>NUCLEOTIDE SEQUENCE [MRNA]</scope>
</reference>
<comment type="subunit">
    <text evidence="2">Component of the 40S small ribosomal subunit.</text>
</comment>
<comment type="subcellular location">
    <subcellularLocation>
        <location evidence="1">Cytoplasm</location>
        <location evidence="1">Cytosol</location>
    </subcellularLocation>
    <subcellularLocation>
        <location evidence="1">Cytoplasm</location>
    </subcellularLocation>
    <subcellularLocation>
        <location evidence="2">Rough endoplasmic reticulum</location>
    </subcellularLocation>
    <text evidence="1 2">Detected on cytosolic polysomes (By similarity). Detected in ribosomes that are associated with the rough endoplasmic reticulum (By similarity).</text>
</comment>
<comment type="similarity">
    <text evidence="4">Belongs to the universal ribosomal protein uS12 family.</text>
</comment>
<sequence length="143" mass="15850">MGKCRGLRTARKLRDHRREQKWHDKQYKKAHLGTALKANPFGGASHAKGIVLEKVGVEAKQPNSAIRKCVRVQLIKNGKKITAFVPNDGCLNFIEENDEVLVAGFGRKGHAVGDIPGVRFKVVKVANVSLLALYKGKKERPRS</sequence>
<protein>
    <recommendedName>
        <fullName evidence="4">Small ribosomal subunit protein uS12</fullName>
    </recommendedName>
    <alternativeName>
        <fullName>40S ribosomal protein S23</fullName>
    </alternativeName>
</protein>
<keyword id="KW-0963">Cytoplasm</keyword>
<keyword id="KW-0256">Endoplasmic reticulum</keyword>
<keyword id="KW-0687">Ribonucleoprotein</keyword>
<keyword id="KW-0689">Ribosomal protein</keyword>
<accession>Q90YQ1</accession>
<proteinExistence type="evidence at transcript level"/>
<dbReference type="EMBL" id="AF402831">
    <property type="protein sequence ID" value="AAK95205.1"/>
    <property type="molecule type" value="mRNA"/>
</dbReference>
<dbReference type="RefSeq" id="NP_001187084.1">
    <property type="nucleotide sequence ID" value="NM_001200155.1"/>
</dbReference>
<dbReference type="SMR" id="Q90YQ1"/>
<dbReference type="STRING" id="7998.ENSIPUP00000010510"/>
<dbReference type="Ensembl" id="ENSIPUT00015043039">
    <property type="protein sequence ID" value="ENSIPUP00015036972"/>
    <property type="gene ID" value="ENSIPUG00015018047"/>
</dbReference>
<dbReference type="GeneID" id="100304573"/>
<dbReference type="KEGG" id="ipu:100304573"/>
<dbReference type="CTD" id="6228"/>
<dbReference type="OrthoDB" id="1713912at2759"/>
<dbReference type="Proteomes" id="UP000221080">
    <property type="component" value="Chromosome 21"/>
</dbReference>
<dbReference type="GO" id="GO:0022627">
    <property type="term" value="C:cytosolic small ribosomal subunit"/>
    <property type="evidence" value="ECO:0000250"/>
    <property type="project" value="UniProtKB"/>
</dbReference>
<dbReference type="GO" id="GO:0005791">
    <property type="term" value="C:rough endoplasmic reticulum"/>
    <property type="evidence" value="ECO:0007669"/>
    <property type="project" value="UniProtKB-SubCell"/>
</dbReference>
<dbReference type="GO" id="GO:0003735">
    <property type="term" value="F:structural constituent of ribosome"/>
    <property type="evidence" value="ECO:0007669"/>
    <property type="project" value="InterPro"/>
</dbReference>
<dbReference type="GO" id="GO:0002181">
    <property type="term" value="P:cytoplasmic translation"/>
    <property type="evidence" value="ECO:0000250"/>
    <property type="project" value="UniProtKB"/>
</dbReference>
<dbReference type="CDD" id="cd03367">
    <property type="entry name" value="Ribosomal_S23"/>
    <property type="match status" value="1"/>
</dbReference>
<dbReference type="FunFam" id="2.40.50.140:FF:000007">
    <property type="entry name" value="40S ribosomal protein S23"/>
    <property type="match status" value="1"/>
</dbReference>
<dbReference type="Gene3D" id="2.40.50.140">
    <property type="entry name" value="Nucleic acid-binding proteins"/>
    <property type="match status" value="1"/>
</dbReference>
<dbReference type="InterPro" id="IPR012340">
    <property type="entry name" value="NA-bd_OB-fold"/>
</dbReference>
<dbReference type="InterPro" id="IPR006032">
    <property type="entry name" value="Ribosomal_uS12"/>
</dbReference>
<dbReference type="InterPro" id="IPR005680">
    <property type="entry name" value="Ribosomal_uS12_euk/arc"/>
</dbReference>
<dbReference type="NCBIfam" id="NF003254">
    <property type="entry name" value="PRK04211.1"/>
    <property type="match status" value="1"/>
</dbReference>
<dbReference type="NCBIfam" id="TIGR00982">
    <property type="entry name" value="uS12_E_A"/>
    <property type="match status" value="1"/>
</dbReference>
<dbReference type="PANTHER" id="PTHR11652">
    <property type="entry name" value="30S RIBOSOMAL PROTEIN S12 FAMILY MEMBER"/>
    <property type="match status" value="1"/>
</dbReference>
<dbReference type="Pfam" id="PF00164">
    <property type="entry name" value="Ribosom_S12_S23"/>
    <property type="match status" value="1"/>
</dbReference>
<dbReference type="PIRSF" id="PIRSF002133">
    <property type="entry name" value="Ribosomal_S12/S23"/>
    <property type="match status" value="1"/>
</dbReference>
<dbReference type="SUPFAM" id="SSF50249">
    <property type="entry name" value="Nucleic acid-binding proteins"/>
    <property type="match status" value="1"/>
</dbReference>
<dbReference type="PROSITE" id="PS00055">
    <property type="entry name" value="RIBOSOMAL_S12"/>
    <property type="match status" value="1"/>
</dbReference>